<proteinExistence type="inferred from homology"/>
<evidence type="ECO:0000255" key="1">
    <source>
        <dbReference type="HAMAP-Rule" id="MF_01006"/>
    </source>
</evidence>
<dbReference type="EC" id="3.6.1.27" evidence="1"/>
<dbReference type="EMBL" id="CP001339">
    <property type="protein sequence ID" value="ACL71428.1"/>
    <property type="molecule type" value="Genomic_DNA"/>
</dbReference>
<dbReference type="RefSeq" id="WP_012636917.1">
    <property type="nucleotide sequence ID" value="NC_011901.1"/>
</dbReference>
<dbReference type="SMR" id="B8GUR7"/>
<dbReference type="STRING" id="396588.Tgr7_0330"/>
<dbReference type="KEGG" id="tgr:Tgr7_0330"/>
<dbReference type="eggNOG" id="COG1968">
    <property type="taxonomic scope" value="Bacteria"/>
</dbReference>
<dbReference type="HOGENOM" id="CLU_060296_1_0_6"/>
<dbReference type="OrthoDB" id="9808289at2"/>
<dbReference type="Proteomes" id="UP000002383">
    <property type="component" value="Chromosome"/>
</dbReference>
<dbReference type="GO" id="GO:0005886">
    <property type="term" value="C:plasma membrane"/>
    <property type="evidence" value="ECO:0007669"/>
    <property type="project" value="UniProtKB-SubCell"/>
</dbReference>
<dbReference type="GO" id="GO:0050380">
    <property type="term" value="F:undecaprenyl-diphosphatase activity"/>
    <property type="evidence" value="ECO:0007669"/>
    <property type="project" value="UniProtKB-UniRule"/>
</dbReference>
<dbReference type="GO" id="GO:0071555">
    <property type="term" value="P:cell wall organization"/>
    <property type="evidence" value="ECO:0007669"/>
    <property type="project" value="UniProtKB-KW"/>
</dbReference>
<dbReference type="GO" id="GO:0009252">
    <property type="term" value="P:peptidoglycan biosynthetic process"/>
    <property type="evidence" value="ECO:0007669"/>
    <property type="project" value="UniProtKB-KW"/>
</dbReference>
<dbReference type="GO" id="GO:0008360">
    <property type="term" value="P:regulation of cell shape"/>
    <property type="evidence" value="ECO:0007669"/>
    <property type="project" value="UniProtKB-KW"/>
</dbReference>
<dbReference type="GO" id="GO:0046677">
    <property type="term" value="P:response to antibiotic"/>
    <property type="evidence" value="ECO:0007669"/>
    <property type="project" value="UniProtKB-UniRule"/>
</dbReference>
<dbReference type="HAMAP" id="MF_01006">
    <property type="entry name" value="Undec_diphosphatase"/>
    <property type="match status" value="1"/>
</dbReference>
<dbReference type="InterPro" id="IPR003824">
    <property type="entry name" value="UppP"/>
</dbReference>
<dbReference type="NCBIfam" id="NF001393">
    <property type="entry name" value="PRK00281.2-4"/>
    <property type="match status" value="1"/>
</dbReference>
<dbReference type="NCBIfam" id="TIGR00753">
    <property type="entry name" value="undec_PP_bacA"/>
    <property type="match status" value="1"/>
</dbReference>
<dbReference type="PANTHER" id="PTHR30622">
    <property type="entry name" value="UNDECAPRENYL-DIPHOSPHATASE"/>
    <property type="match status" value="1"/>
</dbReference>
<dbReference type="PANTHER" id="PTHR30622:SF4">
    <property type="entry name" value="UNDECAPRENYL-DIPHOSPHATASE"/>
    <property type="match status" value="1"/>
</dbReference>
<dbReference type="Pfam" id="PF02673">
    <property type="entry name" value="BacA"/>
    <property type="match status" value="1"/>
</dbReference>
<accession>B8GUR7</accession>
<name>UPPP_THISH</name>
<reference key="1">
    <citation type="journal article" date="2011" name="Stand. Genomic Sci.">
        <title>Complete genome sequence of 'Thioalkalivibrio sulfidophilus' HL-EbGr7.</title>
        <authorList>
            <person name="Muyzer G."/>
            <person name="Sorokin D.Y."/>
            <person name="Mavromatis K."/>
            <person name="Lapidus A."/>
            <person name="Clum A."/>
            <person name="Ivanova N."/>
            <person name="Pati A."/>
            <person name="d'Haeseleer P."/>
            <person name="Woyke T."/>
            <person name="Kyrpides N.C."/>
        </authorList>
    </citation>
    <scope>NUCLEOTIDE SEQUENCE [LARGE SCALE GENOMIC DNA]</scope>
    <source>
        <strain>HL-EbGR7</strain>
    </source>
</reference>
<protein>
    <recommendedName>
        <fullName evidence="1">Undecaprenyl-diphosphatase</fullName>
        <ecNumber evidence="1">3.6.1.27</ecNumber>
    </recommendedName>
    <alternativeName>
        <fullName evidence="1">Bacitracin resistance protein</fullName>
    </alternativeName>
    <alternativeName>
        <fullName evidence="1">Undecaprenyl pyrophosphate phosphatase</fullName>
    </alternativeName>
</protein>
<comment type="function">
    <text evidence="1">Catalyzes the dephosphorylation of undecaprenyl diphosphate (UPP). Confers resistance to bacitracin.</text>
</comment>
<comment type="catalytic activity">
    <reaction evidence="1">
        <text>di-trans,octa-cis-undecaprenyl diphosphate + H2O = di-trans,octa-cis-undecaprenyl phosphate + phosphate + H(+)</text>
        <dbReference type="Rhea" id="RHEA:28094"/>
        <dbReference type="ChEBI" id="CHEBI:15377"/>
        <dbReference type="ChEBI" id="CHEBI:15378"/>
        <dbReference type="ChEBI" id="CHEBI:43474"/>
        <dbReference type="ChEBI" id="CHEBI:58405"/>
        <dbReference type="ChEBI" id="CHEBI:60392"/>
        <dbReference type="EC" id="3.6.1.27"/>
    </reaction>
</comment>
<comment type="subcellular location">
    <subcellularLocation>
        <location evidence="1">Cell inner membrane</location>
        <topology evidence="1">Multi-pass membrane protein</topology>
    </subcellularLocation>
</comment>
<comment type="miscellaneous">
    <text>Bacitracin is thought to be involved in the inhibition of peptidoglycan synthesis by sequestering undecaprenyl diphosphate, thereby reducing the pool of lipid carrier available.</text>
</comment>
<comment type="similarity">
    <text evidence="1">Belongs to the UppP family.</text>
</comment>
<keyword id="KW-0046">Antibiotic resistance</keyword>
<keyword id="KW-0997">Cell inner membrane</keyword>
<keyword id="KW-1003">Cell membrane</keyword>
<keyword id="KW-0133">Cell shape</keyword>
<keyword id="KW-0961">Cell wall biogenesis/degradation</keyword>
<keyword id="KW-0378">Hydrolase</keyword>
<keyword id="KW-0472">Membrane</keyword>
<keyword id="KW-0573">Peptidoglycan synthesis</keyword>
<keyword id="KW-1185">Reference proteome</keyword>
<keyword id="KW-0812">Transmembrane</keyword>
<keyword id="KW-1133">Transmembrane helix</keyword>
<gene>
    <name evidence="1" type="primary">uppP</name>
    <name type="ordered locus">Tgr7_0330</name>
</gene>
<organism>
    <name type="scientific">Thioalkalivibrio sulfidiphilus (strain HL-EbGR7)</name>
    <dbReference type="NCBI Taxonomy" id="396588"/>
    <lineage>
        <taxon>Bacteria</taxon>
        <taxon>Pseudomonadati</taxon>
        <taxon>Pseudomonadota</taxon>
        <taxon>Gammaproteobacteria</taxon>
        <taxon>Chromatiales</taxon>
        <taxon>Ectothiorhodospiraceae</taxon>
        <taxon>Thioalkalivibrio</taxon>
    </lineage>
</organism>
<feature type="chain" id="PRO_1000148835" description="Undecaprenyl-diphosphatase">
    <location>
        <begin position="1"/>
        <end position="266"/>
    </location>
</feature>
<feature type="transmembrane region" description="Helical" evidence="1">
    <location>
        <begin position="8"/>
        <end position="28"/>
    </location>
</feature>
<feature type="transmembrane region" description="Helical" evidence="1">
    <location>
        <begin position="39"/>
        <end position="59"/>
    </location>
</feature>
<feature type="transmembrane region" description="Helical" evidence="1">
    <location>
        <begin position="87"/>
        <end position="107"/>
    </location>
</feature>
<feature type="transmembrane region" description="Helical" evidence="1">
    <location>
        <begin position="113"/>
        <end position="133"/>
    </location>
</feature>
<feature type="transmembrane region" description="Helical" evidence="1">
    <location>
        <begin position="188"/>
        <end position="208"/>
    </location>
</feature>
<feature type="transmembrane region" description="Helical" evidence="1">
    <location>
        <begin position="219"/>
        <end position="239"/>
    </location>
</feature>
<feature type="transmembrane region" description="Helical" evidence="1">
    <location>
        <begin position="246"/>
        <end position="266"/>
    </location>
</feature>
<sequence length="266" mass="28755">MDLFQTLVLALVQGLTEFLPISSAAHLILVPELTDWDDQGLAFDVATHVGSLAAVVIYFRHELRRMTAEWLGSLAGRGLTPDAKLAWAVGLGTIPAGLAGLLFHDIIATHLRSAQVIAMATIGFAVLLLFADVSGKRTRDEHSITWKDVLVIGVAQALALIPGTSRSGITITAALLMGFTRQAAARYSFLLSIPIIALAGGFEILGLVKEPEENIQWGMIVLGALVAGVSAYLCIHYFLKLLAKMTMLPFVIYRLVLGAFLLFLFW</sequence>